<feature type="chain" id="PRO_0000369510" description="Non-structural protein 6">
    <location>
        <begin position="1"/>
        <end position="98"/>
    </location>
</feature>
<evidence type="ECO:0000255" key="1">
    <source>
        <dbReference type="HAMAP-Rule" id="MF_04093"/>
    </source>
</evidence>
<keyword id="KW-1035">Host cytoplasm</keyword>
<keyword id="KW-1045">Host mitochondrion</keyword>
<proteinExistence type="inferred from homology"/>
<dbReference type="EMBL" id="EF672569">
    <property type="protein sequence ID" value="ABV53243.1"/>
    <property type="molecule type" value="Genomic_RNA"/>
</dbReference>
<dbReference type="Proteomes" id="UP000001456">
    <property type="component" value="Genome"/>
</dbReference>
<dbReference type="GO" id="GO:0033650">
    <property type="term" value="C:host cell mitochondrion"/>
    <property type="evidence" value="ECO:0007669"/>
    <property type="project" value="UniProtKB-SubCell"/>
</dbReference>
<dbReference type="HAMAP" id="MF_04093">
    <property type="entry name" value="ROTA_NSP6"/>
    <property type="match status" value="1"/>
</dbReference>
<dbReference type="InterPro" id="IPR006950">
    <property type="entry name" value="Rotavirus_NSP6"/>
</dbReference>
<dbReference type="Pfam" id="PF04866">
    <property type="entry name" value="Rota_NS6"/>
    <property type="match status" value="1"/>
</dbReference>
<reference key="1">
    <citation type="journal article" date="2008" name="J. Virol.">
        <title>Group A human rotavirus genomics: evidence that gene constellations are influenced by viral protein interactions.</title>
        <authorList>
            <person name="Heiman E.M."/>
            <person name="McDonald S.M."/>
            <person name="Barro M."/>
            <person name="Taraporewala Z.F."/>
            <person name="Bar-Magen T."/>
            <person name="Patton J.T."/>
        </authorList>
    </citation>
    <scope>NUCLEOTIDE SEQUENCE [GENOMIC RNA]</scope>
</reference>
<organism>
    <name type="scientific">Rotavirus A (isolate RVA/Human/United Kingdom/A64/1987/G10P11[14])</name>
    <name type="common">RV-A</name>
    <dbReference type="NCBI Taxonomy" id="578827"/>
    <lineage>
        <taxon>Viruses</taxon>
        <taxon>Riboviria</taxon>
        <taxon>Orthornavirae</taxon>
        <taxon>Duplornaviricota</taxon>
        <taxon>Resentoviricetes</taxon>
        <taxon>Reovirales</taxon>
        <taxon>Sedoreoviridae</taxon>
        <taxon>Rotavirus</taxon>
        <taxon>Rotavirus A</taxon>
    </lineage>
</organism>
<protein>
    <recommendedName>
        <fullName evidence="1">Non-structural protein 6</fullName>
        <shortName evidence="1">NSP6</shortName>
    </recommendedName>
</protein>
<accession>B3SRR8</accession>
<organismHost>
    <name type="scientific">Homo sapiens</name>
    <name type="common">Human</name>
    <dbReference type="NCBI Taxonomy" id="9606"/>
</organismHost>
<name>NSP6_ROTH7</name>
<comment type="subunit">
    <text evidence="1">Interacts with NSP2 and NSP5.</text>
</comment>
<comment type="subcellular location">
    <subcellularLocation>
        <location evidence="1">Host cytoplasm</location>
    </subcellularLocation>
    <subcellularLocation>
        <location evidence="1">Host mitochondrion</location>
    </subcellularLocation>
    <text evidence="1">Found in spherical cytoplasmic structures, called viral factories, that appear early after infection and are the site of viral replication and packaging.</text>
</comment>
<comment type="similarity">
    <text evidence="1">Belongs to the rotavirus A NSP6 family.</text>
</comment>
<sequence>MNHLQQRQLFLENLLVGVNNTFHQMQKHSINTCCQSLQKILDHLILLQTIHSPAFRLDRMQLRQMQTLACLWIHQHNHDHQAMLGAIKWISPLIKELR</sequence>